<evidence type="ECO:0000250" key="1">
    <source>
        <dbReference type="UniProtKB" id="P03599"/>
    </source>
</evidence>
<evidence type="ECO:0000250" key="2">
    <source>
        <dbReference type="UniProtKB" id="P23009"/>
    </source>
</evidence>
<evidence type="ECO:0000255" key="3"/>
<evidence type="ECO:0000269" key="4">
    <source>
    </source>
</evidence>
<evidence type="ECO:0000305" key="5"/>
<comment type="function">
    <molecule>VP58</molecule>
    <text evidence="2">Responsible for viral RNA2 accumulation. May function by recruiting the RNA1-encoded polyprotein that contains the replication protein to RNA2 and enable its replication.</text>
</comment>
<comment type="function">
    <molecule>Movement protein</molecule>
    <text evidence="1">Transports the viral genome to neighboring plant cells directly through plasmosdesmata, without any budding. The movement protein allows efficient cell to cell propagation, by bypassing the host cell wall barrier. Acts by forming a tubular structure at the host plasmodesmata, enlarging it enough to allow free passage of virion capsids. Binds to GTP and to single-stranded RNA and single-stranded DNA in a non-sequence-specific manner.</text>
</comment>
<comment type="function">
    <molecule>Large capsid protein</molecule>
    <text evidence="1">Together with the mature small capsid protein, forms an icosahedral capsid (T=3) enclosing the viral positive strand RNA genome, with a diameter of approximately 300 Angstroms. The capsid is formed from 60 copies each of the large and the small capsid protein. The large capsid protein interacts with the viral RNA.</text>
</comment>
<comment type="function">
    <molecule>Mature small capsid protein</molecule>
    <text evidence="1">Together with the large capsid protein, forms an icosahedral capsid (T=3) enclosing the viral positive strand RNA genome, with a diameter of approximately 300 Angstroms. The capsid is formed from 60 copies each of the large and the small capsid protein. The mature small capsid protein forms the turrets at the fivefold axes of the viral particle.</text>
</comment>
<comment type="function">
    <molecule>Small capsid protein precursor</molecule>
    <text evidence="1">The cleavable C-terminus of small capsid protein seems to be involved in viral assembly and RNA packaging. After virus assembly, these amino acids are cleaved off during the normal maturation of the virus. Also seems to act as suppressor of post-transcriptional gene silencing (PTGS), a mechanism of plant viral defense that limits the accumulation of viral RNAs.</text>
</comment>
<comment type="function">
    <molecule>Small capsid protein C-terminus part</molecule>
    <text evidence="1">Acts as a suppressor of RNA-mediated gene silencing, also known as post-transcriptional gene silencing (PTGS), a mechanism of plant viral defense that limits the accumulation of viral RNAs.</text>
</comment>
<comment type="subunit">
    <molecule>Mature small capsid protein</molecule>
    <text evidence="1">Interacts with the large capsid protein.</text>
</comment>
<comment type="subunit">
    <molecule>Large capsid protein</molecule>
    <text evidence="1">Interacts with the small capsid protein. Homomultimer; assembles as pentons. Interacts with the movement protein (via C-terminus).</text>
</comment>
<comment type="subunit">
    <molecule>Movement protein</molecule>
    <text evidence="1">Interacts (via C-terminus) with the large capsid protein.</text>
</comment>
<comment type="subcellular location">
    <molecule>Movement protein</molecule>
    <subcellularLocation>
        <location evidence="1">Host cell junction</location>
        <location evidence="1">Host plasmodesma</location>
    </subcellularLocation>
    <text evidence="1">Assembles in tubules that are embedded within modified plasmodesmata.</text>
</comment>
<comment type="subcellular location">
    <molecule>Large capsid protein</molecule>
    <subcellularLocation>
        <location evidence="1">Virion</location>
    </subcellularLocation>
</comment>
<comment type="subcellular location">
    <molecule>Mature small capsid protein</molecule>
    <subcellularLocation>
        <location evidence="1">Virion</location>
    </subcellularLocation>
</comment>
<comment type="alternative products">
    <event type="alternative initiation"/>
    <isoform>
        <id>P31630-1</id>
        <name>1</name>
        <name>RNA2 polyprotein</name>
        <sequence type="displayed"/>
    </isoform>
    <isoform>
        <id>P31630-2</id>
        <name>2</name>
        <sequence type="described" ref="VSP_059979"/>
    </isoform>
</comment>
<comment type="domain">
    <molecule>Small capsid protein precursor</molecule>
    <text evidence="1">The C-terminus is required for efficient assembly and RNA packaging.</text>
</comment>
<comment type="domain">
    <molecule>Large capsid protein</molecule>
    <text evidence="1">Contains a beta-sheet structure called beta-barrel jelly roll.</text>
</comment>
<comment type="domain">
    <molecule>Mature small capsid protein</molecule>
    <text evidence="1">Contains a beta-sheet structure called beta-barrel jelly roll.</text>
</comment>
<comment type="domain">
    <molecule>Movement protein</molecule>
    <text evidence="1">The C-terminus is involved in binding to the large capsid protein, and hence to the virion.</text>
</comment>
<comment type="PTM">
    <molecule>RNA2 polyprotein</molecule>
    <text evidence="1">Specific enzymatic cleavages by picornain 3C-like protease in vivo yield mature proteins.</text>
</comment>
<comment type="PTM">
    <molecule>Small capsid protein precursor</molecule>
    <text evidence="1">The C-terminal amino acids of the small capsid protein is specifically cleaved by the RNA1 encoded picornain 3C-like protease during maturation.</text>
</comment>
<comment type="caution">
    <text evidence="5">It is uncertain whether Met-1 or Met-93 is the initiator.</text>
</comment>
<accession>P31630</accession>
<name>POL2_CPSMV</name>
<organism>
    <name type="scientific">Cowpea severe mosaic virus (strain DG)</name>
    <name type="common">CPSMV</name>
    <dbReference type="NCBI Taxonomy" id="31716"/>
    <lineage>
        <taxon>Viruses</taxon>
        <taxon>Riboviria</taxon>
        <taxon>Orthornavirae</taxon>
        <taxon>Pisuviricota</taxon>
        <taxon>Pisoniviricetes</taxon>
        <taxon>Picornavirales</taxon>
        <taxon>Secoviridae</taxon>
        <taxon>Comovirinae</taxon>
        <taxon>Comovirus</taxon>
        <taxon>Comovirus severum</taxon>
    </lineage>
</organism>
<protein>
    <recommendedName>
        <fullName>RNA2 polyprotein</fullName>
    </recommendedName>
    <alternativeName>
        <fullName>Genome polyprotein M</fullName>
    </alternativeName>
    <alternativeName>
        <fullName>M RNA polyprotein</fullName>
    </alternativeName>
    <alternativeName>
        <fullName>Middle component RNA polyprotein</fullName>
    </alternativeName>
    <alternativeName>
        <fullName>P2</fullName>
    </alternativeName>
    <component>
        <recommendedName>
            <fullName>VP58</fullName>
        </recommendedName>
        <alternativeName>
            <fullName>P58</fullName>
        </alternativeName>
    </component>
    <component>
        <recommendedName>
            <fullName>Movement protein</fullName>
            <shortName>MP</shortName>
        </recommendedName>
    </component>
    <component>
        <recommendedName>
            <fullName>Large capsid protein</fullName>
            <shortName>LCP</shortName>
        </recommendedName>
        <alternativeName>
            <fullName>Coat protein VP37</fullName>
        </alternativeName>
        <alternativeName>
            <fullName>L subunit</fullName>
        </alternativeName>
        <alternativeName>
            <fullName>Large coat protein</fullName>
        </alternativeName>
    </component>
    <component>
        <recommendedName>
            <fullName>Small capsid protein precursor</fullName>
        </recommendedName>
        <alternativeName>
            <fullName>S subunit</fullName>
        </alternativeName>
    </component>
    <component>
        <recommendedName>
            <fullName>Mature small capsid protein</fullName>
            <shortName>SCP</shortName>
        </recommendedName>
        <alternativeName>
            <fullName>Coat protein VP23</fullName>
        </alternativeName>
        <alternativeName>
            <fullName>Small capsid protein, N-terminus part</fullName>
        </alternativeName>
        <alternativeName>
            <fullName>Small coat protein, N-terminus part</fullName>
        </alternativeName>
    </component>
    <component>
        <recommendedName>
            <fullName>Small capsid protein C-terminus part</fullName>
        </recommendedName>
        <alternativeName>
            <fullName>Small coat protein C-terminus part</fullName>
        </alternativeName>
    </component>
</protein>
<reference key="1">
    <citation type="journal article" date="1992" name="Virology">
        <title>Nucleotide sequence and genetic map of cowpea severe mosaic virus RNA 2 and comparisons with RNA 2 of other comoviruses.</title>
        <authorList>
            <person name="Chen X."/>
            <person name="Bruening G."/>
        </authorList>
    </citation>
    <scope>NUCLEOTIDE SEQUENCE [GENOMIC RNA]</scope>
    <scope>PROTEIN SEQUENCE OF 434-449</scope>
    <scope>ALTERNATIVE INITIATION</scope>
</reference>
<organismHost>
    <name type="scientific">Calopogonium mucunoides</name>
    <dbReference type="NCBI Taxonomy" id="132433"/>
</organismHost>
<organismHost>
    <name type="scientific">Canavalia ensiformis</name>
    <name type="common">Jack bean</name>
    <name type="synonym">Dolichos ensiformis</name>
    <dbReference type="NCBI Taxonomy" id="3823"/>
</organismHost>
<organismHost>
    <name type="scientific">Centrosema pubescens</name>
    <dbReference type="NCBI Taxonomy" id="185703"/>
</organismHost>
<organismHost>
    <name type="scientific">Crotalaria juncea</name>
    <name type="common">Sunn hemp</name>
    <dbReference type="NCBI Taxonomy" id="3829"/>
</organismHost>
<organismHost>
    <name type="scientific">Desmodium</name>
    <dbReference type="NCBI Taxonomy" id="53866"/>
</organismHost>
<organismHost>
    <name type="scientific">Glycine max</name>
    <name type="common">Soybean</name>
    <name type="synonym">Glycine hispida</name>
    <dbReference type="NCBI Taxonomy" id="3847"/>
</organismHost>
<organismHost>
    <name type="scientific">Macroptilium lathyroides</name>
    <dbReference type="NCBI Taxonomy" id="260885"/>
</organismHost>
<organismHost>
    <name type="scientific">Phaseolus vulgaris</name>
    <name type="common">Kidney bean</name>
    <name type="synonym">French bean</name>
    <dbReference type="NCBI Taxonomy" id="3885"/>
</organismHost>
<organismHost>
    <name type="scientific">Psophocarpus tetragonolobus</name>
    <name type="common">Winged bean</name>
    <name type="synonym">Dolichos tetragonolobus</name>
    <dbReference type="NCBI Taxonomy" id="3891"/>
</organismHost>
<organismHost>
    <name type="scientific">Vigna radiata</name>
    <name type="common">Mung bean</name>
    <dbReference type="NCBI Taxonomy" id="157791"/>
</organismHost>
<organismHost>
    <name type="scientific">Vigna unguiculata</name>
    <name type="common">Cowpea</name>
    <dbReference type="NCBI Taxonomy" id="3917"/>
</organismHost>
<keyword id="KW-0024">Alternative initiation</keyword>
<keyword id="KW-0167">Capsid protein</keyword>
<keyword id="KW-0903">Direct protein sequencing</keyword>
<keyword id="KW-0238">DNA-binding</keyword>
<keyword id="KW-0342">GTP-binding</keyword>
<keyword id="KW-1031">Host cell junction</keyword>
<keyword id="KW-0945">Host-virus interaction</keyword>
<keyword id="KW-1090">Inhibition of host innate immune response by virus</keyword>
<keyword id="KW-0547">Nucleotide-binding</keyword>
<keyword id="KW-0694">RNA-binding</keyword>
<keyword id="KW-0941">Suppressor of RNA silencing</keyword>
<keyword id="KW-1142">T=3 icosahedral capsid protein</keyword>
<keyword id="KW-0813">Transport</keyword>
<keyword id="KW-0899">Viral immunoevasion</keyword>
<keyword id="KW-0916">Viral movement protein</keyword>
<keyword id="KW-0946">Virion</keyword>
<proteinExistence type="evidence at protein level"/>
<dbReference type="EMBL" id="M83309">
    <property type="status" value="NOT_ANNOTATED_CDS"/>
    <property type="molecule type" value="Genomic_RNA"/>
</dbReference>
<dbReference type="PIR" id="A42454">
    <property type="entry name" value="GNWXCS"/>
</dbReference>
<dbReference type="SMR" id="P31630"/>
<dbReference type="Proteomes" id="UP000008566">
    <property type="component" value="Genome"/>
</dbReference>
<dbReference type="GO" id="GO:0044219">
    <property type="term" value="C:host cell plasmodesma"/>
    <property type="evidence" value="ECO:0007669"/>
    <property type="project" value="UniProtKB-SubCell"/>
</dbReference>
<dbReference type="GO" id="GO:0039617">
    <property type="term" value="C:T=3 icosahedral viral capsid"/>
    <property type="evidence" value="ECO:0007669"/>
    <property type="project" value="UniProtKB-KW"/>
</dbReference>
<dbReference type="GO" id="GO:0003677">
    <property type="term" value="F:DNA binding"/>
    <property type="evidence" value="ECO:0007669"/>
    <property type="project" value="UniProtKB-KW"/>
</dbReference>
<dbReference type="GO" id="GO:0005525">
    <property type="term" value="F:GTP binding"/>
    <property type="evidence" value="ECO:0007669"/>
    <property type="project" value="UniProtKB-KW"/>
</dbReference>
<dbReference type="GO" id="GO:0003723">
    <property type="term" value="F:RNA binding"/>
    <property type="evidence" value="ECO:0007669"/>
    <property type="project" value="UniProtKB-KW"/>
</dbReference>
<dbReference type="GO" id="GO:0005198">
    <property type="term" value="F:structural molecule activity"/>
    <property type="evidence" value="ECO:0007669"/>
    <property type="project" value="InterPro"/>
</dbReference>
<dbReference type="GO" id="GO:0052170">
    <property type="term" value="P:symbiont-mediated suppression of host innate immune response"/>
    <property type="evidence" value="ECO:0007669"/>
    <property type="project" value="UniProtKB-KW"/>
</dbReference>
<dbReference type="GO" id="GO:0046740">
    <property type="term" value="P:transport of virus in host, cell to cell"/>
    <property type="evidence" value="ECO:0007669"/>
    <property type="project" value="UniProtKB-KW"/>
</dbReference>
<dbReference type="Gene3D" id="2.60.120.20">
    <property type="match status" value="2"/>
</dbReference>
<dbReference type="InterPro" id="IPR003181">
    <property type="entry name" value="Como_LCP"/>
</dbReference>
<dbReference type="InterPro" id="IPR003182">
    <property type="entry name" value="RNA2_polyprotein"/>
</dbReference>
<dbReference type="InterPro" id="IPR029053">
    <property type="entry name" value="Viral_coat"/>
</dbReference>
<dbReference type="Pfam" id="PF02247">
    <property type="entry name" value="Como_LCP"/>
    <property type="match status" value="1"/>
</dbReference>
<dbReference type="Pfam" id="PF02248">
    <property type="entry name" value="Como_SCP"/>
    <property type="match status" value="1"/>
</dbReference>
<dbReference type="SUPFAM" id="SSF88633">
    <property type="entry name" value="Positive stranded ssRNA viruses"/>
    <property type="match status" value="3"/>
</dbReference>
<sequence length="1002" mass="112109">MSTFRYKCKQLDQEIQWWFSGTGNRAFWKFEKKLAELHEWYWSLALDPFPYSGFFYKCFYELFQLWVKLGLIVQVSYLILLLDFFVYTIPKKMASQIETTVEKVKQSGIPADILRKRAVDYWKKNNSHNSQMQDVLPNVDEIYEGMRANIAKYLGRSSTVTSIAKLGKCKVYRKKNIPLANLPSLQTSCVPITLTEESVGNSDYTTEETNSEVKSLHVGAIEIVMNSFASSDCNILGGFLLIDTCHTDINNAIRSIFVAPMRGGRPIRMISFPDTLVQIEPNMNKRFQLLCTTSNGDFMQGRDLAMMHVNVLAHAVTHTSTYTPTPYYEKILSREKGFIVEYLNRMTYAVHNQNHPTEKDLLESDFQFDFEGQPVLKRISSTKAIFSKGSSFRYMISGKKEHKIDKPRLEEDGSKSYIDGLQDTFDTTHATLQSGADLFKRNLDDVSTISDTMLGAMIGQTKVVIPKTLVAGTVLKSGPLSDVMQQGSFRSTIALQRTHIITGKIHVVAMLETAVNTGLGLAICFNSGIRGKASADIYATCSQDAMIWNPSCTKVMQYAFNPNPCSDGWSLAFLERTGYHCVVTCVTGWTGTPLQDTFMTINWHISREACVPKIYTIFDPEPDMMLNRWMGRAIFPQQSTQVVRRMPLSIGGGAGAKNSILMNLPNAILSMWRYFKADLEFELIKMSSPYINATIAFFVAFGDLSDDTVNFEAFPHKLIVFSDKQDRTTISFSKDEFLMAWSTQVRPDTKLSEDGCPYLYAITHNGVSSSVEGDFILGIKMVGLKAVENIGVNPGIIGSRLLGAVAQSGQTQQVWNKIWRIGTPPQATDGLFSFSIDLLGVELVTDGQEGAVSVLSSSPVANLLRTAAWKCGTLHVKVVMTGRVTTTRANWASHTQMSLVNSDNAQHYEAQKWSVSTPHAWEKEFSIDICGPNRGFEMWRSSWSNQTTWILEFTVAGASQSAIFEIFYRLDNSWKSAGNVLMPPLLVGNPRLDIKGRAAAAA</sequence>
<feature type="chain" id="PRO_0000445842" description="RNA2 polyprotein">
    <location>
        <begin position="1"/>
        <end position="1002"/>
    </location>
</feature>
<feature type="chain" id="PRO_0000445843" description="VP58">
    <location>
        <begin position="1"/>
        <end position="433"/>
    </location>
</feature>
<feature type="chain" id="PRO_0000037028" description="Movement protein">
    <location>
        <begin position="93"/>
        <end position="433"/>
    </location>
</feature>
<feature type="chain" id="PRO_0000037029" description="Large capsid protein">
    <location>
        <begin position="434"/>
        <end position="807"/>
    </location>
</feature>
<feature type="chain" id="PRO_0000445844" description="Small capsid protein precursor">
    <location>
        <begin position="808"/>
        <end position="1002"/>
    </location>
</feature>
<feature type="chain" id="PRO_0000037030" description="Mature small capsid protein">
    <location>
        <begin position="808"/>
        <end position="985"/>
    </location>
</feature>
<feature type="chain" id="PRO_0000445845" description="Small capsid protein C-terminus part">
    <location>
        <begin position="986"/>
        <end position="1002"/>
    </location>
</feature>
<feature type="region of interest" description="Hydrophobic" evidence="3">
    <location>
        <begin position="46"/>
        <end position="68"/>
    </location>
</feature>
<feature type="region of interest" description="Involved in tubule formation by the movement protein" evidence="1">
    <location>
        <begin position="392"/>
        <end position="398"/>
    </location>
</feature>
<feature type="site" description="Cleavage; by viral protease" evidence="4">
    <location>
        <begin position="433"/>
        <end position="434"/>
    </location>
</feature>
<feature type="site" description="Cleavage; by viral protease" evidence="1">
    <location>
        <begin position="806"/>
        <end position="807"/>
    </location>
</feature>
<feature type="site" description="Cleavage" evidence="1">
    <location>
        <begin position="985"/>
        <end position="986"/>
    </location>
</feature>
<feature type="splice variant" id="VSP_059979" description="In isoform 2.">
    <location>
        <begin position="1"/>
        <end position="92"/>
    </location>
</feature>